<organism>
    <name type="scientific">Polaromonas sp. (strain JS666 / ATCC BAA-500)</name>
    <dbReference type="NCBI Taxonomy" id="296591"/>
    <lineage>
        <taxon>Bacteria</taxon>
        <taxon>Pseudomonadati</taxon>
        <taxon>Pseudomonadota</taxon>
        <taxon>Betaproteobacteria</taxon>
        <taxon>Burkholderiales</taxon>
        <taxon>Comamonadaceae</taxon>
        <taxon>Polaromonas</taxon>
    </lineage>
</organism>
<feature type="chain" id="PRO_0000319705" description="Phosphoribosyl-AMP cyclohydrolase">
    <location>
        <begin position="1"/>
        <end position="129"/>
    </location>
</feature>
<feature type="binding site" evidence="1">
    <location>
        <position position="76"/>
    </location>
    <ligand>
        <name>Mg(2+)</name>
        <dbReference type="ChEBI" id="CHEBI:18420"/>
    </ligand>
</feature>
<feature type="binding site" evidence="1">
    <location>
        <position position="77"/>
    </location>
    <ligand>
        <name>Zn(2+)</name>
        <dbReference type="ChEBI" id="CHEBI:29105"/>
        <note>ligand shared between dimeric partners</note>
    </ligand>
</feature>
<feature type="binding site" evidence="1">
    <location>
        <position position="78"/>
    </location>
    <ligand>
        <name>Mg(2+)</name>
        <dbReference type="ChEBI" id="CHEBI:18420"/>
    </ligand>
</feature>
<feature type="binding site" evidence="1">
    <location>
        <position position="80"/>
    </location>
    <ligand>
        <name>Mg(2+)</name>
        <dbReference type="ChEBI" id="CHEBI:18420"/>
    </ligand>
</feature>
<feature type="binding site" evidence="1">
    <location>
        <position position="97"/>
    </location>
    <ligand>
        <name>Zn(2+)</name>
        <dbReference type="ChEBI" id="CHEBI:29105"/>
        <note>ligand shared between dimeric partners</note>
    </ligand>
</feature>
<feature type="binding site" evidence="1">
    <location>
        <position position="104"/>
    </location>
    <ligand>
        <name>Zn(2+)</name>
        <dbReference type="ChEBI" id="CHEBI:29105"/>
        <note>ligand shared between dimeric partners</note>
    </ligand>
</feature>
<accession>Q12FC6</accession>
<evidence type="ECO:0000255" key="1">
    <source>
        <dbReference type="HAMAP-Rule" id="MF_01021"/>
    </source>
</evidence>
<reference key="1">
    <citation type="journal article" date="2008" name="Appl. Environ. Microbiol.">
        <title>The genome of Polaromonas sp. strain JS666: insights into the evolution of a hydrocarbon- and xenobiotic-degrading bacterium, and features of relevance to biotechnology.</title>
        <authorList>
            <person name="Mattes T.E."/>
            <person name="Alexander A.K."/>
            <person name="Richardson P.M."/>
            <person name="Munk A.C."/>
            <person name="Han C.S."/>
            <person name="Stothard P."/>
            <person name="Coleman N.V."/>
        </authorList>
    </citation>
    <scope>NUCLEOTIDE SEQUENCE [LARGE SCALE GENOMIC DNA]</scope>
    <source>
        <strain>JS666 / ATCC BAA-500</strain>
    </source>
</reference>
<name>HIS3_POLSJ</name>
<sequence length="129" mass="14707">MNWLDEVSWDEKGLIPVIAQEASSGDVLMFAWMNREALQKTAELGQAVYYSRSRGRLWHKGEESGHLQTVHEIRLDCDNDVVLLKVTQLGHEPGIACHTGRHSCFFHLYKDGQWVVTEPVLKDPGSIYK</sequence>
<gene>
    <name evidence="1" type="primary">hisI</name>
    <name type="ordered locus">Bpro_0810</name>
</gene>
<protein>
    <recommendedName>
        <fullName evidence="1">Phosphoribosyl-AMP cyclohydrolase</fullName>
        <shortName evidence="1">PRA-CH</shortName>
        <ecNumber evidence="1">3.5.4.19</ecNumber>
    </recommendedName>
</protein>
<proteinExistence type="inferred from homology"/>
<dbReference type="EC" id="3.5.4.19" evidence="1"/>
<dbReference type="EMBL" id="CP000316">
    <property type="protein sequence ID" value="ABE42766.1"/>
    <property type="molecule type" value="Genomic_DNA"/>
</dbReference>
<dbReference type="RefSeq" id="WP_011481769.1">
    <property type="nucleotide sequence ID" value="NC_007948.1"/>
</dbReference>
<dbReference type="SMR" id="Q12FC6"/>
<dbReference type="STRING" id="296591.Bpro_0810"/>
<dbReference type="KEGG" id="pol:Bpro_0810"/>
<dbReference type="eggNOG" id="COG0139">
    <property type="taxonomic scope" value="Bacteria"/>
</dbReference>
<dbReference type="HOGENOM" id="CLU_048577_5_0_4"/>
<dbReference type="OrthoDB" id="9795769at2"/>
<dbReference type="UniPathway" id="UPA00031">
    <property type="reaction ID" value="UER00008"/>
</dbReference>
<dbReference type="Proteomes" id="UP000001983">
    <property type="component" value="Chromosome"/>
</dbReference>
<dbReference type="GO" id="GO:0005737">
    <property type="term" value="C:cytoplasm"/>
    <property type="evidence" value="ECO:0007669"/>
    <property type="project" value="UniProtKB-SubCell"/>
</dbReference>
<dbReference type="GO" id="GO:0000287">
    <property type="term" value="F:magnesium ion binding"/>
    <property type="evidence" value="ECO:0007669"/>
    <property type="project" value="UniProtKB-UniRule"/>
</dbReference>
<dbReference type="GO" id="GO:0004635">
    <property type="term" value="F:phosphoribosyl-AMP cyclohydrolase activity"/>
    <property type="evidence" value="ECO:0007669"/>
    <property type="project" value="UniProtKB-UniRule"/>
</dbReference>
<dbReference type="GO" id="GO:0008270">
    <property type="term" value="F:zinc ion binding"/>
    <property type="evidence" value="ECO:0007669"/>
    <property type="project" value="UniProtKB-UniRule"/>
</dbReference>
<dbReference type="GO" id="GO:0000105">
    <property type="term" value="P:L-histidine biosynthetic process"/>
    <property type="evidence" value="ECO:0007669"/>
    <property type="project" value="UniProtKB-UniRule"/>
</dbReference>
<dbReference type="FunFam" id="3.10.20.810:FF:000001">
    <property type="entry name" value="Histidine biosynthesis bifunctional protein HisIE"/>
    <property type="match status" value="1"/>
</dbReference>
<dbReference type="Gene3D" id="3.10.20.810">
    <property type="entry name" value="Phosphoribosyl-AMP cyclohydrolase"/>
    <property type="match status" value="1"/>
</dbReference>
<dbReference type="HAMAP" id="MF_01021">
    <property type="entry name" value="HisI"/>
    <property type="match status" value="1"/>
</dbReference>
<dbReference type="InterPro" id="IPR026660">
    <property type="entry name" value="PRA-CH"/>
</dbReference>
<dbReference type="InterPro" id="IPR002496">
    <property type="entry name" value="PRib_AMP_CycHydrolase_dom"/>
</dbReference>
<dbReference type="InterPro" id="IPR038019">
    <property type="entry name" value="PRib_AMP_CycHydrolase_sf"/>
</dbReference>
<dbReference type="NCBIfam" id="NF000768">
    <property type="entry name" value="PRK00051.1"/>
    <property type="match status" value="1"/>
</dbReference>
<dbReference type="PANTHER" id="PTHR42945">
    <property type="entry name" value="HISTIDINE BIOSYNTHESIS BIFUNCTIONAL PROTEIN"/>
    <property type="match status" value="1"/>
</dbReference>
<dbReference type="PANTHER" id="PTHR42945:SF1">
    <property type="entry name" value="HISTIDINE BIOSYNTHESIS BIFUNCTIONAL PROTEIN HIS7"/>
    <property type="match status" value="1"/>
</dbReference>
<dbReference type="Pfam" id="PF01502">
    <property type="entry name" value="PRA-CH"/>
    <property type="match status" value="1"/>
</dbReference>
<dbReference type="SUPFAM" id="SSF141734">
    <property type="entry name" value="HisI-like"/>
    <property type="match status" value="1"/>
</dbReference>
<comment type="function">
    <text evidence="1">Catalyzes the hydrolysis of the adenine ring of phosphoribosyl-AMP.</text>
</comment>
<comment type="catalytic activity">
    <reaction evidence="1">
        <text>1-(5-phospho-beta-D-ribosyl)-5'-AMP + H2O = 1-(5-phospho-beta-D-ribosyl)-5-[(5-phospho-beta-D-ribosylamino)methylideneamino]imidazole-4-carboxamide</text>
        <dbReference type="Rhea" id="RHEA:20049"/>
        <dbReference type="ChEBI" id="CHEBI:15377"/>
        <dbReference type="ChEBI" id="CHEBI:58435"/>
        <dbReference type="ChEBI" id="CHEBI:59457"/>
        <dbReference type="EC" id="3.5.4.19"/>
    </reaction>
</comment>
<comment type="cofactor">
    <cofactor evidence="1">
        <name>Mg(2+)</name>
        <dbReference type="ChEBI" id="CHEBI:18420"/>
    </cofactor>
    <text evidence="1">Binds 1 Mg(2+) ion per subunit.</text>
</comment>
<comment type="cofactor">
    <cofactor evidence="1">
        <name>Zn(2+)</name>
        <dbReference type="ChEBI" id="CHEBI:29105"/>
    </cofactor>
    <text evidence="1">Binds 1 zinc ion per subunit.</text>
</comment>
<comment type="pathway">
    <text evidence="1">Amino-acid biosynthesis; L-histidine biosynthesis; L-histidine from 5-phospho-alpha-D-ribose 1-diphosphate: step 3/9.</text>
</comment>
<comment type="subunit">
    <text evidence="1">Homodimer.</text>
</comment>
<comment type="subcellular location">
    <subcellularLocation>
        <location evidence="1">Cytoplasm</location>
    </subcellularLocation>
</comment>
<comment type="similarity">
    <text evidence="1">Belongs to the PRA-CH family.</text>
</comment>
<keyword id="KW-0028">Amino-acid biosynthesis</keyword>
<keyword id="KW-0963">Cytoplasm</keyword>
<keyword id="KW-0368">Histidine biosynthesis</keyword>
<keyword id="KW-0378">Hydrolase</keyword>
<keyword id="KW-0460">Magnesium</keyword>
<keyword id="KW-0479">Metal-binding</keyword>
<keyword id="KW-1185">Reference proteome</keyword>
<keyword id="KW-0862">Zinc</keyword>